<organism>
    <name type="scientific">Bacillus anthracis (strain A0248)</name>
    <dbReference type="NCBI Taxonomy" id="592021"/>
    <lineage>
        <taxon>Bacteria</taxon>
        <taxon>Bacillati</taxon>
        <taxon>Bacillota</taxon>
        <taxon>Bacilli</taxon>
        <taxon>Bacillales</taxon>
        <taxon>Bacillaceae</taxon>
        <taxon>Bacillus</taxon>
        <taxon>Bacillus cereus group</taxon>
    </lineage>
</organism>
<accession>C3P993</accession>
<name>DTD_BACAA</name>
<reference key="1">
    <citation type="submission" date="2009-04" db="EMBL/GenBank/DDBJ databases">
        <title>Genome sequence of Bacillus anthracis A0248.</title>
        <authorList>
            <person name="Dodson R.J."/>
            <person name="Munk A.C."/>
            <person name="Bruce D."/>
            <person name="Detter C."/>
            <person name="Tapia R."/>
            <person name="Sutton G."/>
            <person name="Sims D."/>
            <person name="Brettin T."/>
        </authorList>
    </citation>
    <scope>NUCLEOTIDE SEQUENCE [LARGE SCALE GENOMIC DNA]</scope>
    <source>
        <strain>A0248</strain>
    </source>
</reference>
<sequence length="146" mass="16323">MRVVLQRSKEASVTVDGEIVGQIPFGLTLLVGITHEDTEKDATYIAEKIANLRIFEDESGKMNHSVLDVEGQVLSISQFTLYGDCRKGRRPNFMDAAKPDYAEHLYDFFNEEVRKQGLHVETGKFGAMMDVSLINDGPVTLIVESK</sequence>
<comment type="function">
    <text evidence="1">An aminoacyl-tRNA editing enzyme that deacylates mischarged D-aminoacyl-tRNAs. Also deacylates mischarged glycyl-tRNA(Ala), protecting cells against glycine mischarging by AlaRS. Acts via tRNA-based rather than protein-based catalysis; rejects L-amino acids rather than detecting D-amino acids in the active site. By recycling D-aminoacyl-tRNA to D-amino acids and free tRNA molecules, this enzyme counteracts the toxicity associated with the formation of D-aminoacyl-tRNA entities in vivo and helps enforce protein L-homochirality.</text>
</comment>
<comment type="catalytic activity">
    <reaction evidence="1">
        <text>glycyl-tRNA(Ala) + H2O = tRNA(Ala) + glycine + H(+)</text>
        <dbReference type="Rhea" id="RHEA:53744"/>
        <dbReference type="Rhea" id="RHEA-COMP:9657"/>
        <dbReference type="Rhea" id="RHEA-COMP:13640"/>
        <dbReference type="ChEBI" id="CHEBI:15377"/>
        <dbReference type="ChEBI" id="CHEBI:15378"/>
        <dbReference type="ChEBI" id="CHEBI:57305"/>
        <dbReference type="ChEBI" id="CHEBI:78442"/>
        <dbReference type="ChEBI" id="CHEBI:78522"/>
        <dbReference type="EC" id="3.1.1.96"/>
    </reaction>
</comment>
<comment type="catalytic activity">
    <reaction evidence="1">
        <text>a D-aminoacyl-tRNA + H2O = a tRNA + a D-alpha-amino acid + H(+)</text>
        <dbReference type="Rhea" id="RHEA:13953"/>
        <dbReference type="Rhea" id="RHEA-COMP:10123"/>
        <dbReference type="Rhea" id="RHEA-COMP:10124"/>
        <dbReference type="ChEBI" id="CHEBI:15377"/>
        <dbReference type="ChEBI" id="CHEBI:15378"/>
        <dbReference type="ChEBI" id="CHEBI:59871"/>
        <dbReference type="ChEBI" id="CHEBI:78442"/>
        <dbReference type="ChEBI" id="CHEBI:79333"/>
        <dbReference type="EC" id="3.1.1.96"/>
    </reaction>
</comment>
<comment type="subunit">
    <text evidence="1">Homodimer.</text>
</comment>
<comment type="subcellular location">
    <subcellularLocation>
        <location evidence="1">Cytoplasm</location>
    </subcellularLocation>
</comment>
<comment type="domain">
    <text evidence="1">A Gly-cisPro motif from one monomer fits into the active site of the other monomer to allow specific chiral rejection of L-amino acids.</text>
</comment>
<comment type="similarity">
    <text evidence="1">Belongs to the DTD family.</text>
</comment>
<feature type="chain" id="PRO_1000146180" description="D-aminoacyl-tRNA deacylase">
    <location>
        <begin position="1"/>
        <end position="146"/>
    </location>
</feature>
<feature type="short sequence motif" description="Gly-cisPro motif, important for rejection of L-amino acids" evidence="1">
    <location>
        <begin position="137"/>
        <end position="138"/>
    </location>
</feature>
<proteinExistence type="inferred from homology"/>
<protein>
    <recommendedName>
        <fullName evidence="1">D-aminoacyl-tRNA deacylase</fullName>
        <shortName evidence="1">DTD</shortName>
        <ecNumber evidence="1">3.1.1.96</ecNumber>
    </recommendedName>
    <alternativeName>
        <fullName evidence="1">Gly-tRNA(Ala) deacylase</fullName>
    </alternativeName>
</protein>
<dbReference type="EC" id="3.1.1.96" evidence="1"/>
<dbReference type="EMBL" id="CP001598">
    <property type="protein sequence ID" value="ACQ49517.1"/>
    <property type="molecule type" value="Genomic_DNA"/>
</dbReference>
<dbReference type="RefSeq" id="WP_001266954.1">
    <property type="nucleotide sequence ID" value="NC_012659.1"/>
</dbReference>
<dbReference type="SMR" id="C3P993"/>
<dbReference type="GeneID" id="45024277"/>
<dbReference type="KEGG" id="bai:BAA_4653"/>
<dbReference type="HOGENOM" id="CLU_076901_1_0_9"/>
<dbReference type="GO" id="GO:0005737">
    <property type="term" value="C:cytoplasm"/>
    <property type="evidence" value="ECO:0007669"/>
    <property type="project" value="UniProtKB-SubCell"/>
</dbReference>
<dbReference type="GO" id="GO:0051500">
    <property type="term" value="F:D-tyrosyl-tRNA(Tyr) deacylase activity"/>
    <property type="evidence" value="ECO:0007669"/>
    <property type="project" value="TreeGrafter"/>
</dbReference>
<dbReference type="GO" id="GO:0106026">
    <property type="term" value="F:Gly-tRNA(Ala) deacylase activity"/>
    <property type="evidence" value="ECO:0007669"/>
    <property type="project" value="UniProtKB-UniRule"/>
</dbReference>
<dbReference type="GO" id="GO:0043908">
    <property type="term" value="F:Ser(Gly)-tRNA(Ala) hydrolase activity"/>
    <property type="evidence" value="ECO:0007669"/>
    <property type="project" value="UniProtKB-UniRule"/>
</dbReference>
<dbReference type="GO" id="GO:0000049">
    <property type="term" value="F:tRNA binding"/>
    <property type="evidence" value="ECO:0007669"/>
    <property type="project" value="UniProtKB-UniRule"/>
</dbReference>
<dbReference type="GO" id="GO:0019478">
    <property type="term" value="P:D-amino acid catabolic process"/>
    <property type="evidence" value="ECO:0007669"/>
    <property type="project" value="UniProtKB-UniRule"/>
</dbReference>
<dbReference type="CDD" id="cd00563">
    <property type="entry name" value="Dtyr_deacylase"/>
    <property type="match status" value="1"/>
</dbReference>
<dbReference type="FunFam" id="3.50.80.10:FF:000001">
    <property type="entry name" value="D-aminoacyl-tRNA deacylase"/>
    <property type="match status" value="1"/>
</dbReference>
<dbReference type="Gene3D" id="3.50.80.10">
    <property type="entry name" value="D-tyrosyl-tRNA(Tyr) deacylase"/>
    <property type="match status" value="1"/>
</dbReference>
<dbReference type="HAMAP" id="MF_00518">
    <property type="entry name" value="Deacylase_Dtd"/>
    <property type="match status" value="1"/>
</dbReference>
<dbReference type="InterPro" id="IPR003732">
    <property type="entry name" value="Daa-tRNA_deacyls_DTD"/>
</dbReference>
<dbReference type="InterPro" id="IPR023509">
    <property type="entry name" value="DTD-like_sf"/>
</dbReference>
<dbReference type="NCBIfam" id="TIGR00256">
    <property type="entry name" value="D-aminoacyl-tRNA deacylase"/>
    <property type="match status" value="1"/>
</dbReference>
<dbReference type="PANTHER" id="PTHR10472:SF5">
    <property type="entry name" value="D-AMINOACYL-TRNA DEACYLASE 1"/>
    <property type="match status" value="1"/>
</dbReference>
<dbReference type="PANTHER" id="PTHR10472">
    <property type="entry name" value="D-TYROSYL-TRNA TYR DEACYLASE"/>
    <property type="match status" value="1"/>
</dbReference>
<dbReference type="Pfam" id="PF02580">
    <property type="entry name" value="Tyr_Deacylase"/>
    <property type="match status" value="1"/>
</dbReference>
<dbReference type="SUPFAM" id="SSF69500">
    <property type="entry name" value="DTD-like"/>
    <property type="match status" value="1"/>
</dbReference>
<keyword id="KW-0963">Cytoplasm</keyword>
<keyword id="KW-0378">Hydrolase</keyword>
<keyword id="KW-0694">RNA-binding</keyword>
<keyword id="KW-0820">tRNA-binding</keyword>
<evidence type="ECO:0000255" key="1">
    <source>
        <dbReference type="HAMAP-Rule" id="MF_00518"/>
    </source>
</evidence>
<gene>
    <name evidence="1" type="primary">dtd</name>
    <name type="ordered locus">BAA_4653</name>
</gene>